<protein>
    <recommendedName>
        <fullName evidence="1">RNA pyrophosphohydrolase</fullName>
        <ecNumber evidence="1">3.6.1.-</ecNumber>
    </recommendedName>
    <alternativeName>
        <fullName evidence="1">(Di)nucleoside polyphosphate hydrolase</fullName>
    </alternativeName>
</protein>
<comment type="function">
    <text evidence="1">Accelerates the degradation of transcripts by removing pyrophosphate from the 5'-end of triphosphorylated RNA, leading to a more labile monophosphorylated state that can stimulate subsequent ribonuclease cleavage.</text>
</comment>
<comment type="cofactor">
    <cofactor evidence="1">
        <name>a divalent metal cation</name>
        <dbReference type="ChEBI" id="CHEBI:60240"/>
    </cofactor>
</comment>
<comment type="similarity">
    <text evidence="1">Belongs to the Nudix hydrolase family. RppH subfamily.</text>
</comment>
<accession>B0BWQ7</accession>
<evidence type="ECO:0000255" key="1">
    <source>
        <dbReference type="HAMAP-Rule" id="MF_00298"/>
    </source>
</evidence>
<feature type="chain" id="PRO_1000078973" description="RNA pyrophosphohydrolase">
    <location>
        <begin position="1"/>
        <end position="161"/>
    </location>
</feature>
<feature type="domain" description="Nudix hydrolase" evidence="1">
    <location>
        <begin position="12"/>
        <end position="154"/>
    </location>
</feature>
<feature type="short sequence motif" description="Nudix box">
    <location>
        <begin position="46"/>
        <end position="67"/>
    </location>
</feature>
<reference key="1">
    <citation type="journal article" date="2008" name="Infect. Immun.">
        <title>Genomic comparison of virulent Rickettsia rickettsii Sheila Smith and avirulent Rickettsia rickettsii Iowa.</title>
        <authorList>
            <person name="Ellison D.W."/>
            <person name="Clark T.R."/>
            <person name="Sturdevant D.E."/>
            <person name="Virtaneva K."/>
            <person name="Porcella S.F."/>
            <person name="Hackstadt T."/>
        </authorList>
    </citation>
    <scope>NUCLEOTIDE SEQUENCE [LARGE SCALE GENOMIC DNA]</scope>
    <source>
        <strain>Iowa</strain>
    </source>
</reference>
<sequence length="161" mass="18614">MSNSSKKHLDLPYRPGVGMMILNADNHIFVGKRIDTKISAWQMPQGGIVPGETPSIAAMREMLEEIGSDKGYIIAESKCWYSYDVPSFLIPKLWNGNFRGQKQRWFLIRFTGNNEDININTSNPEFDQWRWASLDELLSIIIPFKRKLYQAVVKEFESLIQ</sequence>
<keyword id="KW-0378">Hydrolase</keyword>
<proteinExistence type="inferred from homology"/>
<organism>
    <name type="scientific">Rickettsia rickettsii (strain Iowa)</name>
    <dbReference type="NCBI Taxonomy" id="452659"/>
    <lineage>
        <taxon>Bacteria</taxon>
        <taxon>Pseudomonadati</taxon>
        <taxon>Pseudomonadota</taxon>
        <taxon>Alphaproteobacteria</taxon>
        <taxon>Rickettsiales</taxon>
        <taxon>Rickettsiaceae</taxon>
        <taxon>Rickettsieae</taxon>
        <taxon>Rickettsia</taxon>
        <taxon>spotted fever group</taxon>
    </lineage>
</organism>
<dbReference type="EC" id="3.6.1.-" evidence="1"/>
<dbReference type="EMBL" id="CP000766">
    <property type="protein sequence ID" value="ABY72283.1"/>
    <property type="molecule type" value="Genomic_DNA"/>
</dbReference>
<dbReference type="RefSeq" id="WP_012150535.1">
    <property type="nucleotide sequence ID" value="NC_010263.3"/>
</dbReference>
<dbReference type="SMR" id="B0BWQ7"/>
<dbReference type="KEGG" id="rrj:RrIowa_0388"/>
<dbReference type="eggNOG" id="COG0494">
    <property type="taxonomic scope" value="Bacteria"/>
</dbReference>
<dbReference type="HOGENOM" id="CLU_087195_3_0_5"/>
<dbReference type="Proteomes" id="UP000000796">
    <property type="component" value="Chromosome"/>
</dbReference>
<dbReference type="GO" id="GO:0005737">
    <property type="term" value="C:cytoplasm"/>
    <property type="evidence" value="ECO:0007669"/>
    <property type="project" value="TreeGrafter"/>
</dbReference>
<dbReference type="GO" id="GO:0034353">
    <property type="term" value="F:mRNA 5'-diphosphatase activity"/>
    <property type="evidence" value="ECO:0007669"/>
    <property type="project" value="TreeGrafter"/>
</dbReference>
<dbReference type="GO" id="GO:0006402">
    <property type="term" value="P:mRNA catabolic process"/>
    <property type="evidence" value="ECO:0007669"/>
    <property type="project" value="TreeGrafter"/>
</dbReference>
<dbReference type="CDD" id="cd03671">
    <property type="entry name" value="NUDIX_Ap4A_hydrolase_plant_like"/>
    <property type="match status" value="1"/>
</dbReference>
<dbReference type="Gene3D" id="3.90.79.10">
    <property type="entry name" value="Nucleoside Triphosphate Pyrophosphohydrolase"/>
    <property type="match status" value="1"/>
</dbReference>
<dbReference type="HAMAP" id="MF_00298">
    <property type="entry name" value="Nudix_RppH"/>
    <property type="match status" value="1"/>
</dbReference>
<dbReference type="InterPro" id="IPR015797">
    <property type="entry name" value="NUDIX_hydrolase-like_dom_sf"/>
</dbReference>
<dbReference type="InterPro" id="IPR020084">
    <property type="entry name" value="NUDIX_hydrolase_CS"/>
</dbReference>
<dbReference type="InterPro" id="IPR000086">
    <property type="entry name" value="NUDIX_hydrolase_dom"/>
</dbReference>
<dbReference type="InterPro" id="IPR022927">
    <property type="entry name" value="RppH"/>
</dbReference>
<dbReference type="NCBIfam" id="NF001936">
    <property type="entry name" value="PRK00714.1-3"/>
    <property type="match status" value="1"/>
</dbReference>
<dbReference type="NCBIfam" id="NF001938">
    <property type="entry name" value="PRK00714.1-5"/>
    <property type="match status" value="1"/>
</dbReference>
<dbReference type="PANTHER" id="PTHR23114">
    <property type="entry name" value="M7GPPPN-MRNA HYDROLASE"/>
    <property type="match status" value="1"/>
</dbReference>
<dbReference type="PANTHER" id="PTHR23114:SF17">
    <property type="entry name" value="M7GPPPN-MRNA HYDROLASE"/>
    <property type="match status" value="1"/>
</dbReference>
<dbReference type="Pfam" id="PF00293">
    <property type="entry name" value="NUDIX"/>
    <property type="match status" value="1"/>
</dbReference>
<dbReference type="SUPFAM" id="SSF55811">
    <property type="entry name" value="Nudix"/>
    <property type="match status" value="1"/>
</dbReference>
<dbReference type="PROSITE" id="PS51462">
    <property type="entry name" value="NUDIX"/>
    <property type="match status" value="1"/>
</dbReference>
<dbReference type="PROSITE" id="PS00893">
    <property type="entry name" value="NUDIX_BOX"/>
    <property type="match status" value="1"/>
</dbReference>
<gene>
    <name evidence="1" type="primary">rppH</name>
    <name evidence="1" type="synonym">nudH</name>
    <name type="ordered locus">RrIowa_0388</name>
</gene>
<name>RPPH_RICRO</name>